<keyword id="KW-0175">Coiled coil</keyword>
<keyword id="KW-1185">Reference proteome</keyword>
<keyword id="KW-0688">Ribosomal frameshifting</keyword>
<keyword id="KW-0814">Transposable element</keyword>
<accession>Q6Q5P6</accession>
<accession>D3DKQ6</accession>
<proteinExistence type="inferred from homology"/>
<sequence length="413" mass="48214">MATPVRDETRNVIDDNISARIQSKVKTNDTVRQTPSSLRKVSIKDEQVKQYQRNLNRFKTILNGLKAEEEKLSETDDIQMLAEKLLKLGETIDKVENRIVDLVEKIQLLETNENNNILHEHIDATGTYYLFDTLTSTNKRFYPKDCVFDYRTNNVENIPILLNNFKKFIKKYQFDDVFENDIIEIDPRENEILCKIIKEGLGESLDIMNTNTTDIFRIIDGLKNKYRSLHGRDVRIRAWEKVLVDTTCRNSALLMNKLQKLVLMEKWIFSKCCQDCPNLKDYLQEAIMGTLHESLRNSVKQRLYNIPHNVGINHEEFLINTVIETVIDLSPIADDQIENSCMYCKSVFHCSINCKKKPNRELRPDSTNFSKTYYLQGAQRQQQLKSSAKRTKVLEQDTKKVKQSVQQQKTGNY</sequence>
<comment type="function">
    <text evidence="1">Capsid protein (CA) is the structural component of the virus-like particle (VLP), forming the shell that encapsulates the retrotransposons dimeric RNA genome.</text>
</comment>
<comment type="alternative products">
    <event type="ribosomal frameshifting"/>
    <isoform>
        <id>Q6Q5P6-1</id>
        <name>Transposon Ty4-H Gag polyprotein</name>
        <sequence type="displayed"/>
    </isoform>
    <isoform>
        <id>P0C2J7-1</id>
        <name>Transposon Ty4-H Gag-Pol polyprotein</name>
        <sequence type="external"/>
    </isoform>
    <text>The Gag-Pol polyprotein is generated by a +1 ribosomal frameshift.</text>
</comment>
<comment type="miscellaneous">
    <text>Retrotransposons are mobile genetic entities that are able to replicate via an RNA intermediate and a reverse transcription step. In contrast to retroviruses, retrotransposons are non-infectious, lack an envelope and remain intracellular. Ty4 retrotransposons belong to the copia elements (pseudoviridae).</text>
</comment>
<comment type="miscellaneous">
    <molecule>Isoform Transposon Ty4-H Gag polyprotein</molecule>
    <text>Produced by conventional translation.</text>
</comment>
<protein>
    <recommendedName>
        <fullName>Transposon Ty4-H Gag polyprotein</fullName>
        <shortName>TY4A</shortName>
        <shortName>Transposon Ty4 protein A</shortName>
    </recommendedName>
</protein>
<dbReference type="EMBL" id="U11581">
    <property type="status" value="NOT_ANNOTATED_CDS"/>
    <property type="molecule type" value="Genomic_DNA"/>
</dbReference>
<dbReference type="EMBL" id="AY557839">
    <property type="protein sequence ID" value="AAS56165.1"/>
    <property type="molecule type" value="Genomic_DNA"/>
</dbReference>
<dbReference type="EMBL" id="BK006934">
    <property type="protein sequence ID" value="DAA06679.1"/>
    <property type="molecule type" value="Genomic_DNA"/>
</dbReference>
<dbReference type="PIR" id="S52610">
    <property type="entry name" value="S52610"/>
</dbReference>
<dbReference type="RefSeq" id="NP_058134.1">
    <molecule id="Q6Q5P6-1"/>
    <property type="nucleotide sequence ID" value="NM_001184403.1"/>
</dbReference>
<dbReference type="SMR" id="Q6Q5P6"/>
<dbReference type="BioGRID" id="36416">
    <property type="interactions" value="15"/>
</dbReference>
<dbReference type="FunCoup" id="Q6Q5P6">
    <property type="interactions" value="25"/>
</dbReference>
<dbReference type="PaxDb" id="4932-YHL009W-A"/>
<dbReference type="TopDownProteomics" id="Q6Q5P6-1">
    <molecule id="Q6Q5P6-1"/>
</dbReference>
<dbReference type="GeneID" id="856379"/>
<dbReference type="KEGG" id="sce:YHL009W-A"/>
<dbReference type="AGR" id="SGD:S000007371"/>
<dbReference type="SGD" id="S000007371">
    <property type="gene designation" value="YHL009W-A"/>
</dbReference>
<dbReference type="VEuPathDB" id="FungiDB:YHL009W-A"/>
<dbReference type="eggNOG" id="KOG0017">
    <property type="taxonomic scope" value="Eukaryota"/>
</dbReference>
<dbReference type="HOGENOM" id="CLU_065017_0_0_1"/>
<dbReference type="InParanoid" id="Q6Q5P6"/>
<dbReference type="OrthoDB" id="4049668at2759"/>
<dbReference type="Proteomes" id="UP000002311">
    <property type="component" value="Chromosome VIII"/>
</dbReference>
<dbReference type="RNAct" id="Q6Q5P6">
    <property type="molecule type" value="protein"/>
</dbReference>
<dbReference type="GO" id="GO:0075523">
    <property type="term" value="P:viral translational frameshifting"/>
    <property type="evidence" value="ECO:0007669"/>
    <property type="project" value="UniProtKB-KW"/>
</dbReference>
<organism>
    <name type="scientific">Saccharomyces cerevisiae (strain ATCC 204508 / S288c)</name>
    <name type="common">Baker's yeast</name>
    <dbReference type="NCBI Taxonomy" id="559292"/>
    <lineage>
        <taxon>Eukaryota</taxon>
        <taxon>Fungi</taxon>
        <taxon>Dikarya</taxon>
        <taxon>Ascomycota</taxon>
        <taxon>Saccharomycotina</taxon>
        <taxon>Saccharomycetes</taxon>
        <taxon>Saccharomycetales</taxon>
        <taxon>Saccharomycetaceae</taxon>
        <taxon>Saccharomyces</taxon>
    </lineage>
</organism>
<reference key="1">
    <citation type="journal article" date="1994" name="Science">
        <title>Complete nucleotide sequence of Saccharomyces cerevisiae chromosome VIII.</title>
        <authorList>
            <person name="Johnston M."/>
            <person name="Andrews S."/>
            <person name="Brinkman R."/>
            <person name="Cooper J."/>
            <person name="Ding H."/>
            <person name="Dover J."/>
            <person name="Du Z."/>
            <person name="Favello A."/>
            <person name="Fulton L."/>
            <person name="Gattung S."/>
            <person name="Geisel C."/>
            <person name="Kirsten J."/>
            <person name="Kucaba T."/>
            <person name="Hillier L.W."/>
            <person name="Jier M."/>
            <person name="Johnston L."/>
            <person name="Langston Y."/>
            <person name="Latreille P."/>
            <person name="Louis E.J."/>
            <person name="Macri C."/>
            <person name="Mardis E."/>
            <person name="Menezes S."/>
            <person name="Mouser L."/>
            <person name="Nhan M."/>
            <person name="Rifkin L."/>
            <person name="Riles L."/>
            <person name="St Peter H."/>
            <person name="Trevaskis E."/>
            <person name="Vaughan K."/>
            <person name="Vignati D."/>
            <person name="Wilcox L."/>
            <person name="Wohldman P."/>
            <person name="Waterston R."/>
            <person name="Wilson R."/>
            <person name="Vaudin M."/>
        </authorList>
    </citation>
    <scope>NUCLEOTIDE SEQUENCE [LARGE SCALE GENOMIC DNA]</scope>
    <source>
        <strain>ATCC 204508 / S288c</strain>
    </source>
</reference>
<reference key="2">
    <citation type="journal article" date="2014" name="G3 (Bethesda)">
        <title>The reference genome sequence of Saccharomyces cerevisiae: Then and now.</title>
        <authorList>
            <person name="Engel S.R."/>
            <person name="Dietrich F.S."/>
            <person name="Fisk D.G."/>
            <person name="Binkley G."/>
            <person name="Balakrishnan R."/>
            <person name="Costanzo M.C."/>
            <person name="Dwight S.S."/>
            <person name="Hitz B.C."/>
            <person name="Karra K."/>
            <person name="Nash R.S."/>
            <person name="Weng S."/>
            <person name="Wong E.D."/>
            <person name="Lloyd P."/>
            <person name="Skrzypek M.S."/>
            <person name="Miyasato S.R."/>
            <person name="Simison M."/>
            <person name="Cherry J.M."/>
        </authorList>
    </citation>
    <scope>GENOME REANNOTATION</scope>
    <source>
        <strain>ATCC 204508 / S288c</strain>
    </source>
</reference>
<reference key="3">
    <citation type="journal article" date="2007" name="Genome Res.">
        <title>Approaching a complete repository of sequence-verified protein-encoding clones for Saccharomyces cerevisiae.</title>
        <authorList>
            <person name="Hu Y."/>
            <person name="Rolfs A."/>
            <person name="Bhullar B."/>
            <person name="Murthy T.V.S."/>
            <person name="Zhu C."/>
            <person name="Berger M.F."/>
            <person name="Camargo A.A."/>
            <person name="Kelley F."/>
            <person name="McCarron S."/>
            <person name="Jepson D."/>
            <person name="Richardson A."/>
            <person name="Raphael J."/>
            <person name="Moreira D."/>
            <person name="Taycher E."/>
            <person name="Zuo D."/>
            <person name="Mohr S."/>
            <person name="Kane M.F."/>
            <person name="Williamson J."/>
            <person name="Simpson A.J.G."/>
            <person name="Bulyk M.L."/>
            <person name="Harlow E."/>
            <person name="Marsischky G."/>
            <person name="Kolodner R.D."/>
            <person name="LaBaer J."/>
        </authorList>
    </citation>
    <scope>NUCLEOTIDE SEQUENCE [GENOMIC DNA]</scope>
    <source>
        <strain>ATCC 204508 / S288c</strain>
    </source>
</reference>
<reference key="4">
    <citation type="journal article" date="1998" name="Genome Res.">
        <title>Transposable elements and genome organization: a comprehensive survey of retrotransposons revealed by the complete Saccharomyces cerevisiae genome sequence.</title>
        <authorList>
            <person name="Kim J.M."/>
            <person name="Vanguri S."/>
            <person name="Boeke J.D."/>
            <person name="Gabriel A."/>
            <person name="Voytas D.F."/>
        </authorList>
    </citation>
    <scope>NOMENCLATURE</scope>
</reference>
<reference key="5">
    <citation type="journal article" date="2005" name="Cytogenet. Genome Res.">
        <title>Happy together: the life and times of Ty retrotransposons and their hosts.</title>
        <authorList>
            <person name="Lesage P."/>
            <person name="Todeschini A.L."/>
        </authorList>
    </citation>
    <scope>REVIEW</scope>
</reference>
<name>YH41A_YEAST</name>
<evidence type="ECO:0000250" key="1"/>
<evidence type="ECO:0000255" key="2"/>
<evidence type="ECO:0000256" key="3">
    <source>
        <dbReference type="SAM" id="MobiDB-lite"/>
    </source>
</evidence>
<feature type="chain" id="PRO_0000279381" description="Transposon Ty4-H Gag polyprotein">
    <location>
        <begin position="1"/>
        <end position="413"/>
    </location>
</feature>
<feature type="region of interest" description="Disordered" evidence="3">
    <location>
        <begin position="380"/>
        <end position="413"/>
    </location>
</feature>
<feature type="coiled-coil region" evidence="2">
    <location>
        <begin position="39"/>
        <end position="115"/>
    </location>
</feature>
<feature type="compositionally biased region" description="Low complexity" evidence="3">
    <location>
        <begin position="403"/>
        <end position="413"/>
    </location>
</feature>
<gene>
    <name type="primary">TY4A-H</name>
    <name type="synonym">YHLWTy4-1 GAG</name>
    <name type="ordered locus">YHL009W-A</name>
    <name type="ORF">YHL008W-B</name>
</gene>